<protein>
    <recommendedName>
        <fullName evidence="1">Elongation factor G</fullName>
        <shortName evidence="1">EF-G</shortName>
    </recommendedName>
</protein>
<name>EFG_ACIC5</name>
<evidence type="ECO:0000255" key="1">
    <source>
        <dbReference type="HAMAP-Rule" id="MF_00054"/>
    </source>
</evidence>
<reference key="1">
    <citation type="journal article" date="2009" name="Appl. Environ. Microbiol.">
        <title>Three genomes from the phylum Acidobacteria provide insight into the lifestyles of these microorganisms in soils.</title>
        <authorList>
            <person name="Ward N.L."/>
            <person name="Challacombe J.F."/>
            <person name="Janssen P.H."/>
            <person name="Henrissat B."/>
            <person name="Coutinho P.M."/>
            <person name="Wu M."/>
            <person name="Xie G."/>
            <person name="Haft D.H."/>
            <person name="Sait M."/>
            <person name="Badger J."/>
            <person name="Barabote R.D."/>
            <person name="Bradley B."/>
            <person name="Brettin T.S."/>
            <person name="Brinkac L.M."/>
            <person name="Bruce D."/>
            <person name="Creasy T."/>
            <person name="Daugherty S.C."/>
            <person name="Davidsen T.M."/>
            <person name="DeBoy R.T."/>
            <person name="Detter J.C."/>
            <person name="Dodson R.J."/>
            <person name="Durkin A.S."/>
            <person name="Ganapathy A."/>
            <person name="Gwinn-Giglio M."/>
            <person name="Han C.S."/>
            <person name="Khouri H."/>
            <person name="Kiss H."/>
            <person name="Kothari S.P."/>
            <person name="Madupu R."/>
            <person name="Nelson K.E."/>
            <person name="Nelson W.C."/>
            <person name="Paulsen I."/>
            <person name="Penn K."/>
            <person name="Ren Q."/>
            <person name="Rosovitz M.J."/>
            <person name="Selengut J.D."/>
            <person name="Shrivastava S."/>
            <person name="Sullivan S.A."/>
            <person name="Tapia R."/>
            <person name="Thompson L.S."/>
            <person name="Watkins K.L."/>
            <person name="Yang Q."/>
            <person name="Yu C."/>
            <person name="Zafar N."/>
            <person name="Zhou L."/>
            <person name="Kuske C.R."/>
        </authorList>
    </citation>
    <scope>NUCLEOTIDE SEQUENCE [LARGE SCALE GENOMIC DNA]</scope>
    <source>
        <strain>ATCC 51196 / DSM 11244 / BCRC 80197 / JCM 7670 / NBRC 15755 / NCIMB 13165 / 161</strain>
    </source>
</reference>
<proteinExistence type="inferred from homology"/>
<dbReference type="EMBL" id="CP001472">
    <property type="protein sequence ID" value="ACO32113.1"/>
    <property type="molecule type" value="Genomic_DNA"/>
</dbReference>
<dbReference type="RefSeq" id="WP_015896587.1">
    <property type="nucleotide sequence ID" value="NC_012483.1"/>
</dbReference>
<dbReference type="SMR" id="C1F645"/>
<dbReference type="FunCoup" id="C1F645">
    <property type="interactions" value="574"/>
</dbReference>
<dbReference type="STRING" id="240015.ACP_1454"/>
<dbReference type="KEGG" id="aca:ACP_1454"/>
<dbReference type="eggNOG" id="COG0480">
    <property type="taxonomic scope" value="Bacteria"/>
</dbReference>
<dbReference type="HOGENOM" id="CLU_002794_4_1_0"/>
<dbReference type="InParanoid" id="C1F645"/>
<dbReference type="OrthoDB" id="9804431at2"/>
<dbReference type="Proteomes" id="UP000002207">
    <property type="component" value="Chromosome"/>
</dbReference>
<dbReference type="GO" id="GO:0005737">
    <property type="term" value="C:cytoplasm"/>
    <property type="evidence" value="ECO:0007669"/>
    <property type="project" value="UniProtKB-SubCell"/>
</dbReference>
<dbReference type="GO" id="GO:0005525">
    <property type="term" value="F:GTP binding"/>
    <property type="evidence" value="ECO:0007669"/>
    <property type="project" value="UniProtKB-UniRule"/>
</dbReference>
<dbReference type="GO" id="GO:0003924">
    <property type="term" value="F:GTPase activity"/>
    <property type="evidence" value="ECO:0007669"/>
    <property type="project" value="InterPro"/>
</dbReference>
<dbReference type="GO" id="GO:0003746">
    <property type="term" value="F:translation elongation factor activity"/>
    <property type="evidence" value="ECO:0007669"/>
    <property type="project" value="UniProtKB-UniRule"/>
</dbReference>
<dbReference type="GO" id="GO:0032790">
    <property type="term" value="P:ribosome disassembly"/>
    <property type="evidence" value="ECO:0007669"/>
    <property type="project" value="TreeGrafter"/>
</dbReference>
<dbReference type="CDD" id="cd01886">
    <property type="entry name" value="EF-G"/>
    <property type="match status" value="1"/>
</dbReference>
<dbReference type="CDD" id="cd16262">
    <property type="entry name" value="EFG_III"/>
    <property type="match status" value="1"/>
</dbReference>
<dbReference type="CDD" id="cd01434">
    <property type="entry name" value="EFG_mtEFG1_IV"/>
    <property type="match status" value="1"/>
</dbReference>
<dbReference type="CDD" id="cd03713">
    <property type="entry name" value="EFG_mtEFG_C"/>
    <property type="match status" value="1"/>
</dbReference>
<dbReference type="CDD" id="cd04088">
    <property type="entry name" value="EFG_mtEFG_II"/>
    <property type="match status" value="1"/>
</dbReference>
<dbReference type="FunFam" id="2.40.30.10:FF:000006">
    <property type="entry name" value="Elongation factor G"/>
    <property type="match status" value="1"/>
</dbReference>
<dbReference type="FunFam" id="3.30.230.10:FF:000003">
    <property type="entry name" value="Elongation factor G"/>
    <property type="match status" value="1"/>
</dbReference>
<dbReference type="FunFam" id="3.30.70.240:FF:000001">
    <property type="entry name" value="Elongation factor G"/>
    <property type="match status" value="1"/>
</dbReference>
<dbReference type="FunFam" id="3.30.70.870:FF:000001">
    <property type="entry name" value="Elongation factor G"/>
    <property type="match status" value="1"/>
</dbReference>
<dbReference type="FunFam" id="3.40.50.300:FF:000029">
    <property type="entry name" value="Elongation factor G"/>
    <property type="match status" value="1"/>
</dbReference>
<dbReference type="Gene3D" id="3.30.230.10">
    <property type="match status" value="1"/>
</dbReference>
<dbReference type="Gene3D" id="3.30.70.240">
    <property type="match status" value="1"/>
</dbReference>
<dbReference type="Gene3D" id="3.30.70.870">
    <property type="entry name" value="Elongation Factor G (Translational Gtpase), domain 3"/>
    <property type="match status" value="1"/>
</dbReference>
<dbReference type="Gene3D" id="3.40.50.300">
    <property type="entry name" value="P-loop containing nucleotide triphosphate hydrolases"/>
    <property type="match status" value="1"/>
</dbReference>
<dbReference type="Gene3D" id="2.40.30.10">
    <property type="entry name" value="Translation factors"/>
    <property type="match status" value="1"/>
</dbReference>
<dbReference type="HAMAP" id="MF_00054_B">
    <property type="entry name" value="EF_G_EF_2_B"/>
    <property type="match status" value="1"/>
</dbReference>
<dbReference type="InterPro" id="IPR041095">
    <property type="entry name" value="EFG_II"/>
</dbReference>
<dbReference type="InterPro" id="IPR009022">
    <property type="entry name" value="EFG_III"/>
</dbReference>
<dbReference type="InterPro" id="IPR035647">
    <property type="entry name" value="EFG_III/V"/>
</dbReference>
<dbReference type="InterPro" id="IPR047872">
    <property type="entry name" value="EFG_IV"/>
</dbReference>
<dbReference type="InterPro" id="IPR035649">
    <property type="entry name" value="EFG_V"/>
</dbReference>
<dbReference type="InterPro" id="IPR000640">
    <property type="entry name" value="EFG_V-like"/>
</dbReference>
<dbReference type="InterPro" id="IPR004161">
    <property type="entry name" value="EFTu-like_2"/>
</dbReference>
<dbReference type="InterPro" id="IPR031157">
    <property type="entry name" value="G_TR_CS"/>
</dbReference>
<dbReference type="InterPro" id="IPR027417">
    <property type="entry name" value="P-loop_NTPase"/>
</dbReference>
<dbReference type="InterPro" id="IPR020568">
    <property type="entry name" value="Ribosomal_Su5_D2-typ_SF"/>
</dbReference>
<dbReference type="InterPro" id="IPR014721">
    <property type="entry name" value="Ribsml_uS5_D2-typ_fold_subgr"/>
</dbReference>
<dbReference type="InterPro" id="IPR005225">
    <property type="entry name" value="Small_GTP-bd"/>
</dbReference>
<dbReference type="InterPro" id="IPR000795">
    <property type="entry name" value="T_Tr_GTP-bd_dom"/>
</dbReference>
<dbReference type="InterPro" id="IPR009000">
    <property type="entry name" value="Transl_B-barrel_sf"/>
</dbReference>
<dbReference type="InterPro" id="IPR004540">
    <property type="entry name" value="Transl_elong_EFG/EF2"/>
</dbReference>
<dbReference type="InterPro" id="IPR005517">
    <property type="entry name" value="Transl_elong_EFG/EF2_IV"/>
</dbReference>
<dbReference type="NCBIfam" id="TIGR00484">
    <property type="entry name" value="EF-G"/>
    <property type="match status" value="1"/>
</dbReference>
<dbReference type="NCBIfam" id="NF009379">
    <property type="entry name" value="PRK12740.1-3"/>
    <property type="match status" value="1"/>
</dbReference>
<dbReference type="NCBIfam" id="NF009381">
    <property type="entry name" value="PRK12740.1-5"/>
    <property type="match status" value="1"/>
</dbReference>
<dbReference type="NCBIfam" id="TIGR00231">
    <property type="entry name" value="small_GTP"/>
    <property type="match status" value="1"/>
</dbReference>
<dbReference type="PANTHER" id="PTHR43261:SF1">
    <property type="entry name" value="RIBOSOME-RELEASING FACTOR 2, MITOCHONDRIAL"/>
    <property type="match status" value="1"/>
</dbReference>
<dbReference type="PANTHER" id="PTHR43261">
    <property type="entry name" value="TRANSLATION ELONGATION FACTOR G-RELATED"/>
    <property type="match status" value="1"/>
</dbReference>
<dbReference type="Pfam" id="PF00679">
    <property type="entry name" value="EFG_C"/>
    <property type="match status" value="1"/>
</dbReference>
<dbReference type="Pfam" id="PF14492">
    <property type="entry name" value="EFG_III"/>
    <property type="match status" value="1"/>
</dbReference>
<dbReference type="Pfam" id="PF03764">
    <property type="entry name" value="EFG_IV"/>
    <property type="match status" value="1"/>
</dbReference>
<dbReference type="Pfam" id="PF00009">
    <property type="entry name" value="GTP_EFTU"/>
    <property type="match status" value="1"/>
</dbReference>
<dbReference type="Pfam" id="PF03144">
    <property type="entry name" value="GTP_EFTU_D2"/>
    <property type="match status" value="1"/>
</dbReference>
<dbReference type="PRINTS" id="PR00315">
    <property type="entry name" value="ELONGATNFCT"/>
</dbReference>
<dbReference type="SMART" id="SM00838">
    <property type="entry name" value="EFG_C"/>
    <property type="match status" value="1"/>
</dbReference>
<dbReference type="SMART" id="SM00889">
    <property type="entry name" value="EFG_IV"/>
    <property type="match status" value="1"/>
</dbReference>
<dbReference type="SUPFAM" id="SSF54980">
    <property type="entry name" value="EF-G C-terminal domain-like"/>
    <property type="match status" value="2"/>
</dbReference>
<dbReference type="SUPFAM" id="SSF52540">
    <property type="entry name" value="P-loop containing nucleoside triphosphate hydrolases"/>
    <property type="match status" value="1"/>
</dbReference>
<dbReference type="SUPFAM" id="SSF54211">
    <property type="entry name" value="Ribosomal protein S5 domain 2-like"/>
    <property type="match status" value="1"/>
</dbReference>
<dbReference type="SUPFAM" id="SSF50447">
    <property type="entry name" value="Translation proteins"/>
    <property type="match status" value="1"/>
</dbReference>
<dbReference type="PROSITE" id="PS00301">
    <property type="entry name" value="G_TR_1"/>
    <property type="match status" value="1"/>
</dbReference>
<dbReference type="PROSITE" id="PS51722">
    <property type="entry name" value="G_TR_2"/>
    <property type="match status" value="1"/>
</dbReference>
<feature type="chain" id="PRO_1000201423" description="Elongation factor G">
    <location>
        <begin position="1"/>
        <end position="693"/>
    </location>
</feature>
<feature type="domain" description="tr-type G">
    <location>
        <begin position="8"/>
        <end position="283"/>
    </location>
</feature>
<feature type="binding site" evidence="1">
    <location>
        <begin position="17"/>
        <end position="24"/>
    </location>
    <ligand>
        <name>GTP</name>
        <dbReference type="ChEBI" id="CHEBI:37565"/>
    </ligand>
</feature>
<feature type="binding site" evidence="1">
    <location>
        <begin position="81"/>
        <end position="85"/>
    </location>
    <ligand>
        <name>GTP</name>
        <dbReference type="ChEBI" id="CHEBI:37565"/>
    </ligand>
</feature>
<feature type="binding site" evidence="1">
    <location>
        <begin position="135"/>
        <end position="138"/>
    </location>
    <ligand>
        <name>GTP</name>
        <dbReference type="ChEBI" id="CHEBI:37565"/>
    </ligand>
</feature>
<accession>C1F645</accession>
<keyword id="KW-0963">Cytoplasm</keyword>
<keyword id="KW-0251">Elongation factor</keyword>
<keyword id="KW-0342">GTP-binding</keyword>
<keyword id="KW-0547">Nucleotide-binding</keyword>
<keyword id="KW-0648">Protein biosynthesis</keyword>
<keyword id="KW-1185">Reference proteome</keyword>
<sequence length="693" mass="76547">MARQVPLNRCRNIGIMAHIDAGKTTTTERVLFYTGITHRIGEVHEGTATMDYMEQEQERGITITSAATTCMWNNIRINIIDTPGHVDFTAEVERSLRVLDGAVALFDSVSGVQPQTETVWRQGDKYRVPRICFVNKMDKAGADFEHVIETIRKRLGARPVAIQIPIGAEANFKGVVDLIEMRAILWHDETMGAKYSVEEIPADLMKKAEAFRMQLIETVAENDDEMLHKFLEGETPTVEELKKALRKATIDMHVFPVLCGTAFKNKGVQTLLDAVVDYLPSPLDVPPVEGIDPSDTSVVMTREAKDDAPFSALGFKLINDPFGKLGFIRVYSGVLKTGDTVLNPRTGKTERVGRLVKMHANKREDITEIYAGDICAAVGLKELKTGDTLCATTDPIALSAIDFPEPVISVAVEPKTKGDQEKMGIALSKLADEDPTFKVRTDEDSGQTIISGMGELHLEILVDRMKREHKVEANVGEPKVAFRETIRKASEAEGKYIRQTGGSGNYGHVKIRLEPNEPGKGFEFIDAIKGGVVPREYIKPTEQGIREALQNGVLAGYEMVDVKATLFDGSYHDVDSNEMAFKIAGSMAFKEAAKKASPVLLEPVMSVEVTVPEEHMGTIIGDINSRRGRIEGMEHSGGSQVIRAIVPLKEMFGYVNDIRSSTQGRASYTMQFARYEEAPRMISEEIIGRNQGK</sequence>
<comment type="function">
    <text evidence="1">Catalyzes the GTP-dependent ribosomal translocation step during translation elongation. During this step, the ribosome changes from the pre-translocational (PRE) to the post-translocational (POST) state as the newly formed A-site-bound peptidyl-tRNA and P-site-bound deacylated tRNA move to the P and E sites, respectively. Catalyzes the coordinated movement of the two tRNA molecules, the mRNA and conformational changes in the ribosome.</text>
</comment>
<comment type="subcellular location">
    <subcellularLocation>
        <location evidence="1">Cytoplasm</location>
    </subcellularLocation>
</comment>
<comment type="similarity">
    <text evidence="1">Belongs to the TRAFAC class translation factor GTPase superfamily. Classic translation factor GTPase family. EF-G/EF-2 subfamily.</text>
</comment>
<gene>
    <name evidence="1" type="primary">fusA</name>
    <name type="ordered locus">ACP_1454</name>
</gene>
<organism>
    <name type="scientific">Acidobacterium capsulatum (strain ATCC 51196 / DSM 11244 / BCRC 80197 / JCM 7670 / NBRC 15755 / NCIMB 13165 / 161)</name>
    <dbReference type="NCBI Taxonomy" id="240015"/>
    <lineage>
        <taxon>Bacteria</taxon>
        <taxon>Pseudomonadati</taxon>
        <taxon>Acidobacteriota</taxon>
        <taxon>Terriglobia</taxon>
        <taxon>Terriglobales</taxon>
        <taxon>Acidobacteriaceae</taxon>
        <taxon>Acidobacterium</taxon>
    </lineage>
</organism>